<keyword id="KW-0315">Glutamine amidotransferase</keyword>
<keyword id="KW-0378">Hydrolase</keyword>
<keyword id="KW-0456">Lyase</keyword>
<keyword id="KW-0663">Pyridoxal phosphate</keyword>
<keyword id="KW-1185">Reference proteome</keyword>
<organism>
    <name type="scientific">Shouchella clausii (strain KSM-K16)</name>
    <name type="common">Alkalihalobacillus clausii</name>
    <dbReference type="NCBI Taxonomy" id="66692"/>
    <lineage>
        <taxon>Bacteria</taxon>
        <taxon>Bacillati</taxon>
        <taxon>Bacillota</taxon>
        <taxon>Bacilli</taxon>
        <taxon>Bacillales</taxon>
        <taxon>Bacillaceae</taxon>
        <taxon>Shouchella</taxon>
    </lineage>
</organism>
<name>PDXT_SHOC1</name>
<evidence type="ECO:0000255" key="1">
    <source>
        <dbReference type="HAMAP-Rule" id="MF_01615"/>
    </source>
</evidence>
<comment type="function">
    <text evidence="1">Catalyzes the hydrolysis of glutamine to glutamate and ammonia as part of the biosynthesis of pyridoxal 5'-phosphate. The resulting ammonia molecule is channeled to the active site of PdxS.</text>
</comment>
<comment type="catalytic activity">
    <reaction evidence="1">
        <text>aldehydo-D-ribose 5-phosphate + D-glyceraldehyde 3-phosphate + L-glutamine = pyridoxal 5'-phosphate + L-glutamate + phosphate + 3 H2O + H(+)</text>
        <dbReference type="Rhea" id="RHEA:31507"/>
        <dbReference type="ChEBI" id="CHEBI:15377"/>
        <dbReference type="ChEBI" id="CHEBI:15378"/>
        <dbReference type="ChEBI" id="CHEBI:29985"/>
        <dbReference type="ChEBI" id="CHEBI:43474"/>
        <dbReference type="ChEBI" id="CHEBI:58273"/>
        <dbReference type="ChEBI" id="CHEBI:58359"/>
        <dbReference type="ChEBI" id="CHEBI:59776"/>
        <dbReference type="ChEBI" id="CHEBI:597326"/>
        <dbReference type="EC" id="4.3.3.6"/>
    </reaction>
</comment>
<comment type="catalytic activity">
    <reaction evidence="1">
        <text>L-glutamine + H2O = L-glutamate + NH4(+)</text>
        <dbReference type="Rhea" id="RHEA:15889"/>
        <dbReference type="ChEBI" id="CHEBI:15377"/>
        <dbReference type="ChEBI" id="CHEBI:28938"/>
        <dbReference type="ChEBI" id="CHEBI:29985"/>
        <dbReference type="ChEBI" id="CHEBI:58359"/>
        <dbReference type="EC" id="3.5.1.2"/>
    </reaction>
</comment>
<comment type="pathway">
    <text evidence="1">Cofactor biosynthesis; pyridoxal 5'-phosphate biosynthesis.</text>
</comment>
<comment type="subunit">
    <text evidence="1">In the presence of PdxS, forms a dodecamer of heterodimers. Only shows activity in the heterodimer.</text>
</comment>
<comment type="similarity">
    <text evidence="1">Belongs to the glutaminase PdxT/SNO family.</text>
</comment>
<accession>Q5WKW1</accession>
<gene>
    <name evidence="1" type="primary">pdxT</name>
    <name type="ordered locus">ABC0452</name>
</gene>
<feature type="chain" id="PRO_0000135630" description="Pyridoxal 5'-phosphate synthase subunit PdxT">
    <location>
        <begin position="1"/>
        <end position="195"/>
    </location>
</feature>
<feature type="active site" description="Nucleophile" evidence="1">
    <location>
        <position position="78"/>
    </location>
</feature>
<feature type="active site" description="Charge relay system" evidence="1">
    <location>
        <position position="169"/>
    </location>
</feature>
<feature type="active site" description="Charge relay system" evidence="1">
    <location>
        <position position="171"/>
    </location>
</feature>
<feature type="binding site" evidence="1">
    <location>
        <begin position="46"/>
        <end position="48"/>
    </location>
    <ligand>
        <name>L-glutamine</name>
        <dbReference type="ChEBI" id="CHEBI:58359"/>
    </ligand>
</feature>
<feature type="binding site" evidence="1">
    <location>
        <position position="105"/>
    </location>
    <ligand>
        <name>L-glutamine</name>
        <dbReference type="ChEBI" id="CHEBI:58359"/>
    </ligand>
</feature>
<feature type="binding site" evidence="1">
    <location>
        <begin position="133"/>
        <end position="134"/>
    </location>
    <ligand>
        <name>L-glutamine</name>
        <dbReference type="ChEBI" id="CHEBI:58359"/>
    </ligand>
</feature>
<sequence>MKIGVLALQGAVSEHIRLLTNSGAEAIEIKRADQLAEVDGLILPGGESTAMRRLIDKYQLFKPLREFGESGKPILGTCAGLILMAKTLSGEQDGHLGFIDMVVERNAFGRQRDSFEATLDVKGVAEKLTAVFIRAPLVKEVGPDVDILSEYNGEIVAVKQGSFLACSFHPELTDDARLHQAFIKMVAERSVLEAH</sequence>
<dbReference type="EC" id="4.3.3.6" evidence="1"/>
<dbReference type="EC" id="3.5.1.2" evidence="1"/>
<dbReference type="EMBL" id="AP006627">
    <property type="protein sequence ID" value="BAD62994.1"/>
    <property type="molecule type" value="Genomic_DNA"/>
</dbReference>
<dbReference type="RefSeq" id="WP_011245313.1">
    <property type="nucleotide sequence ID" value="NC_006582.1"/>
</dbReference>
<dbReference type="SMR" id="Q5WKW1"/>
<dbReference type="STRING" id="66692.ABC0452"/>
<dbReference type="KEGG" id="bcl:ABC0452"/>
<dbReference type="eggNOG" id="COG0311">
    <property type="taxonomic scope" value="Bacteria"/>
</dbReference>
<dbReference type="HOGENOM" id="CLU_069674_2_0_9"/>
<dbReference type="OrthoDB" id="9810320at2"/>
<dbReference type="UniPathway" id="UPA00245"/>
<dbReference type="Proteomes" id="UP000001168">
    <property type="component" value="Chromosome"/>
</dbReference>
<dbReference type="GO" id="GO:0005829">
    <property type="term" value="C:cytosol"/>
    <property type="evidence" value="ECO:0007669"/>
    <property type="project" value="TreeGrafter"/>
</dbReference>
<dbReference type="GO" id="GO:1903600">
    <property type="term" value="C:glutaminase complex"/>
    <property type="evidence" value="ECO:0007669"/>
    <property type="project" value="TreeGrafter"/>
</dbReference>
<dbReference type="GO" id="GO:0004359">
    <property type="term" value="F:glutaminase activity"/>
    <property type="evidence" value="ECO:0007669"/>
    <property type="project" value="UniProtKB-UniRule"/>
</dbReference>
<dbReference type="GO" id="GO:0036381">
    <property type="term" value="F:pyridoxal 5'-phosphate synthase (glutamine hydrolysing) activity"/>
    <property type="evidence" value="ECO:0007669"/>
    <property type="project" value="UniProtKB-UniRule"/>
</dbReference>
<dbReference type="GO" id="GO:0006543">
    <property type="term" value="P:glutamine catabolic process"/>
    <property type="evidence" value="ECO:0007669"/>
    <property type="project" value="UniProtKB-UniRule"/>
</dbReference>
<dbReference type="GO" id="GO:0042823">
    <property type="term" value="P:pyridoxal phosphate biosynthetic process"/>
    <property type="evidence" value="ECO:0007669"/>
    <property type="project" value="UniProtKB-UniRule"/>
</dbReference>
<dbReference type="GO" id="GO:0008614">
    <property type="term" value="P:pyridoxine metabolic process"/>
    <property type="evidence" value="ECO:0007669"/>
    <property type="project" value="TreeGrafter"/>
</dbReference>
<dbReference type="CDD" id="cd01749">
    <property type="entry name" value="GATase1_PB"/>
    <property type="match status" value="1"/>
</dbReference>
<dbReference type="FunFam" id="3.40.50.880:FF:000010">
    <property type="entry name" value="uncharacterized protein LOC100176842 isoform X2"/>
    <property type="match status" value="1"/>
</dbReference>
<dbReference type="Gene3D" id="3.40.50.880">
    <property type="match status" value="1"/>
</dbReference>
<dbReference type="HAMAP" id="MF_01615">
    <property type="entry name" value="PdxT"/>
    <property type="match status" value="1"/>
</dbReference>
<dbReference type="InterPro" id="IPR029062">
    <property type="entry name" value="Class_I_gatase-like"/>
</dbReference>
<dbReference type="InterPro" id="IPR002161">
    <property type="entry name" value="PdxT/SNO"/>
</dbReference>
<dbReference type="InterPro" id="IPR021196">
    <property type="entry name" value="PdxT/SNO_CS"/>
</dbReference>
<dbReference type="NCBIfam" id="TIGR03800">
    <property type="entry name" value="PLP_synth_Pdx2"/>
    <property type="match status" value="1"/>
</dbReference>
<dbReference type="PANTHER" id="PTHR31559">
    <property type="entry name" value="PYRIDOXAL 5'-PHOSPHATE SYNTHASE SUBUNIT SNO"/>
    <property type="match status" value="1"/>
</dbReference>
<dbReference type="PANTHER" id="PTHR31559:SF0">
    <property type="entry name" value="PYRIDOXAL 5'-PHOSPHATE SYNTHASE SUBUNIT SNO1-RELATED"/>
    <property type="match status" value="1"/>
</dbReference>
<dbReference type="Pfam" id="PF01174">
    <property type="entry name" value="SNO"/>
    <property type="match status" value="1"/>
</dbReference>
<dbReference type="PIRSF" id="PIRSF005639">
    <property type="entry name" value="Glut_amidoT_SNO"/>
    <property type="match status" value="1"/>
</dbReference>
<dbReference type="SUPFAM" id="SSF52317">
    <property type="entry name" value="Class I glutamine amidotransferase-like"/>
    <property type="match status" value="1"/>
</dbReference>
<dbReference type="PROSITE" id="PS01236">
    <property type="entry name" value="PDXT_SNO_1"/>
    <property type="match status" value="1"/>
</dbReference>
<dbReference type="PROSITE" id="PS51130">
    <property type="entry name" value="PDXT_SNO_2"/>
    <property type="match status" value="1"/>
</dbReference>
<protein>
    <recommendedName>
        <fullName evidence="1">Pyridoxal 5'-phosphate synthase subunit PdxT</fullName>
        <ecNumber evidence="1">4.3.3.6</ecNumber>
    </recommendedName>
    <alternativeName>
        <fullName evidence="1">Pdx2</fullName>
    </alternativeName>
    <alternativeName>
        <fullName evidence="1">Pyridoxal 5'-phosphate synthase glutaminase subunit</fullName>
        <ecNumber evidence="1">3.5.1.2</ecNumber>
    </alternativeName>
</protein>
<reference key="1">
    <citation type="submission" date="2003-10" db="EMBL/GenBank/DDBJ databases">
        <title>The complete genome sequence of the alkaliphilic Bacillus clausii KSM-K16.</title>
        <authorList>
            <person name="Takaki Y."/>
            <person name="Kageyama Y."/>
            <person name="Shimamura S."/>
            <person name="Suzuki H."/>
            <person name="Nishi S."/>
            <person name="Hatada Y."/>
            <person name="Kawai S."/>
            <person name="Ito S."/>
            <person name="Horikoshi K."/>
        </authorList>
    </citation>
    <scope>NUCLEOTIDE SEQUENCE [LARGE SCALE GENOMIC DNA]</scope>
    <source>
        <strain>KSM-K16</strain>
    </source>
</reference>
<proteinExistence type="inferred from homology"/>